<organism>
    <name type="scientific">Xenopus laevis</name>
    <name type="common">African clawed frog</name>
    <dbReference type="NCBI Taxonomy" id="8355"/>
    <lineage>
        <taxon>Eukaryota</taxon>
        <taxon>Metazoa</taxon>
        <taxon>Chordata</taxon>
        <taxon>Craniata</taxon>
        <taxon>Vertebrata</taxon>
        <taxon>Euteleostomi</taxon>
        <taxon>Amphibia</taxon>
        <taxon>Batrachia</taxon>
        <taxon>Anura</taxon>
        <taxon>Pipoidea</taxon>
        <taxon>Pipidae</taxon>
        <taxon>Xenopodinae</taxon>
        <taxon>Xenopus</taxon>
        <taxon>Xenopus</taxon>
    </lineage>
</organism>
<sequence>MEREGLEWIVAFLRMLVSWGASCAMIFGGVVPYIPQYRDIRRTQNAEGFSIYVCLMLLIANILRILFWFGHHFESPLLWQSIIMIVTMLLMLKLCTEVRVANELNPKRRSFTDFDTAFFWHWTRFIDFIQCVLAFTGVTGYITYLLLDSPLFVEILGFLAVFTEALLGVPQLYRNHQNYSTEGMSIKMVLMWTSGDTFKSAYFVLNQAPFQFSICGLLQVFVDIAILLQVYLYSAYPQKPVSHATSAKAL</sequence>
<evidence type="ECO:0000255" key="1"/>
<evidence type="ECO:0000305" key="2"/>
<dbReference type="EMBL" id="BC070652">
    <property type="protein sequence ID" value="AAH70652.1"/>
    <property type="molecule type" value="mRNA"/>
</dbReference>
<dbReference type="RefSeq" id="NP_001084833.1">
    <property type="nucleotide sequence ID" value="NM_001091364.1"/>
</dbReference>
<dbReference type="SMR" id="Q6NRS2"/>
<dbReference type="DNASU" id="431879"/>
<dbReference type="GeneID" id="431879"/>
<dbReference type="KEGG" id="xla:431879"/>
<dbReference type="AGR" id="Xenbase:XB-GENE-988369"/>
<dbReference type="CTD" id="431879"/>
<dbReference type="Xenbase" id="XB-GENE-988369">
    <property type="gene designation" value="slc66a2.L"/>
</dbReference>
<dbReference type="OrthoDB" id="292213at2759"/>
<dbReference type="Proteomes" id="UP000186698">
    <property type="component" value="Chromosome 6L"/>
</dbReference>
<dbReference type="Bgee" id="431879">
    <property type="expression patterns" value="Expressed in egg cell and 19 other cell types or tissues"/>
</dbReference>
<dbReference type="GO" id="GO:0005829">
    <property type="term" value="C:cytosol"/>
    <property type="evidence" value="ECO:0007669"/>
    <property type="project" value="GOC"/>
</dbReference>
<dbReference type="GO" id="GO:0005768">
    <property type="term" value="C:endosome"/>
    <property type="evidence" value="ECO:0000318"/>
    <property type="project" value="GO_Central"/>
</dbReference>
<dbReference type="GO" id="GO:0016020">
    <property type="term" value="C:membrane"/>
    <property type="evidence" value="ECO:0007669"/>
    <property type="project" value="UniProtKB-SubCell"/>
</dbReference>
<dbReference type="GO" id="GO:0005802">
    <property type="term" value="C:trans-Golgi network"/>
    <property type="evidence" value="ECO:0000318"/>
    <property type="project" value="GO_Central"/>
</dbReference>
<dbReference type="GO" id="GO:0045332">
    <property type="term" value="P:phospholipid translocation"/>
    <property type="evidence" value="ECO:0000318"/>
    <property type="project" value="GO_Central"/>
</dbReference>
<dbReference type="GO" id="GO:0042147">
    <property type="term" value="P:retrograde transport, endosome to Golgi"/>
    <property type="evidence" value="ECO:0000318"/>
    <property type="project" value="GO_Central"/>
</dbReference>
<dbReference type="FunFam" id="1.20.1280.290:FF:000005">
    <property type="entry name" value="PQ-loop repeat-containing protein 1"/>
    <property type="match status" value="1"/>
</dbReference>
<dbReference type="FunFam" id="1.20.1280.290:FF:000008">
    <property type="entry name" value="PQ-loop repeat-containing protein 1"/>
    <property type="match status" value="1"/>
</dbReference>
<dbReference type="Gene3D" id="1.20.1280.290">
    <property type="match status" value="2"/>
</dbReference>
<dbReference type="InterPro" id="IPR006603">
    <property type="entry name" value="PQ-loop_rpt"/>
</dbReference>
<dbReference type="InterPro" id="IPR052241">
    <property type="entry name" value="SLC66/Scramblase_ANY1"/>
</dbReference>
<dbReference type="PANTHER" id="PTHR14856">
    <property type="entry name" value="PQ-LOOP REPEAT-CONTAINING PROTEIN 1-LIKE PROTEIN"/>
    <property type="match status" value="1"/>
</dbReference>
<dbReference type="PANTHER" id="PTHR14856:SF10">
    <property type="entry name" value="SOLUTE CARRIER FAMILY 66 MEMBER 2"/>
    <property type="match status" value="1"/>
</dbReference>
<dbReference type="Pfam" id="PF04193">
    <property type="entry name" value="PQ-loop"/>
    <property type="match status" value="2"/>
</dbReference>
<dbReference type="SMART" id="SM00679">
    <property type="entry name" value="CTNS"/>
    <property type="match status" value="2"/>
</dbReference>
<reference key="1">
    <citation type="submission" date="2004-05" db="EMBL/GenBank/DDBJ databases">
        <authorList>
            <consortium name="NIH - Xenopus Gene Collection (XGC) project"/>
        </authorList>
    </citation>
    <scope>NUCLEOTIDE SEQUENCE [LARGE SCALE MRNA]</scope>
    <source>
        <tissue>Embryo</tissue>
    </source>
</reference>
<comment type="subcellular location">
    <subcellularLocation>
        <location evidence="2">Membrane</location>
        <topology evidence="2">Multi-pass membrane protein</topology>
    </subcellularLocation>
</comment>
<gene>
    <name type="primary">slc66a2</name>
    <name type="synonym">pqlc1</name>
</gene>
<protein>
    <recommendedName>
        <fullName evidence="2">Solute carrier family 66 member 2</fullName>
    </recommendedName>
    <alternativeName>
        <fullName>PQ-loop repeat-containing protein 1</fullName>
    </alternativeName>
</protein>
<feature type="chain" id="PRO_0000282433" description="Solute carrier family 66 member 2">
    <location>
        <begin position="1"/>
        <end position="250"/>
    </location>
</feature>
<feature type="transmembrane region" description="Helical" evidence="1">
    <location>
        <begin position="15"/>
        <end position="35"/>
    </location>
</feature>
<feature type="transmembrane region" description="Helical" evidence="1">
    <location>
        <begin position="49"/>
        <end position="69"/>
    </location>
</feature>
<feature type="transmembrane region" description="Helical" evidence="1">
    <location>
        <begin position="72"/>
        <end position="92"/>
    </location>
</feature>
<feature type="transmembrane region" description="Helical" evidence="1">
    <location>
        <begin position="118"/>
        <end position="138"/>
    </location>
</feature>
<feature type="transmembrane region" description="Helical" evidence="1">
    <location>
        <begin position="151"/>
        <end position="173"/>
    </location>
</feature>
<feature type="transmembrane region" description="Helical" evidence="1">
    <location>
        <begin position="212"/>
        <end position="232"/>
    </location>
</feature>
<feature type="domain" description="PQ-loop 1">
    <location>
        <begin position="14"/>
        <end position="80"/>
    </location>
</feature>
<feature type="domain" description="PQ-loop 2">
    <location>
        <begin position="149"/>
        <end position="215"/>
    </location>
</feature>
<accession>Q6NRS2</accession>
<name>S66A2_XENLA</name>
<proteinExistence type="evidence at transcript level"/>
<keyword id="KW-0472">Membrane</keyword>
<keyword id="KW-1185">Reference proteome</keyword>
<keyword id="KW-0677">Repeat</keyword>
<keyword id="KW-0812">Transmembrane</keyword>
<keyword id="KW-1133">Transmembrane helix</keyword>